<gene>
    <name evidence="2" type="primary">folE</name>
    <name type="ordered locus">APL_0903</name>
</gene>
<sequence length="218" mass="24838">MSIISAEAQKVREALIAKGIETPTVQLTKDKDSRRAEIQQHMRSVLELLGLDLQDDSLEETPHRLAKMYVDEIFSGLDYATFPKITNIENRMKVSEMVLVDDITLTSTCEHHFVTIDGKVAVAYYPKKWVIGLSKINRVVQFFAQRPQVQERFTEQILTAFQTILETDDVAVFVKATHFCVKCRGVKDTNSYTVTSAFGGVFLEDRETRKEFLGLINK</sequence>
<accession>A3N0R3</accession>
<comment type="catalytic activity">
    <reaction evidence="2">
        <text>GTP + H2O = 7,8-dihydroneopterin 3'-triphosphate + formate + H(+)</text>
        <dbReference type="Rhea" id="RHEA:17473"/>
        <dbReference type="ChEBI" id="CHEBI:15377"/>
        <dbReference type="ChEBI" id="CHEBI:15378"/>
        <dbReference type="ChEBI" id="CHEBI:15740"/>
        <dbReference type="ChEBI" id="CHEBI:37565"/>
        <dbReference type="ChEBI" id="CHEBI:58462"/>
        <dbReference type="EC" id="3.5.4.16"/>
    </reaction>
</comment>
<comment type="pathway">
    <text evidence="2">Cofactor biosynthesis; 7,8-dihydroneopterin triphosphate biosynthesis; 7,8-dihydroneopterin triphosphate from GTP: step 1/1.</text>
</comment>
<comment type="subunit">
    <text evidence="1">Toroid-shaped homodecamer, composed of two pentamers of five dimers.</text>
</comment>
<comment type="similarity">
    <text evidence="2">Belongs to the GTP cyclohydrolase I family.</text>
</comment>
<keyword id="KW-0342">GTP-binding</keyword>
<keyword id="KW-0378">Hydrolase</keyword>
<keyword id="KW-0479">Metal-binding</keyword>
<keyword id="KW-0547">Nucleotide-binding</keyword>
<keyword id="KW-0554">One-carbon metabolism</keyword>
<keyword id="KW-1185">Reference proteome</keyword>
<keyword id="KW-0862">Zinc</keyword>
<evidence type="ECO:0000250" key="1"/>
<evidence type="ECO:0000255" key="2">
    <source>
        <dbReference type="HAMAP-Rule" id="MF_00223"/>
    </source>
</evidence>
<dbReference type="EC" id="3.5.4.16" evidence="2"/>
<dbReference type="EMBL" id="CP000569">
    <property type="protein sequence ID" value="ABN73999.1"/>
    <property type="molecule type" value="Genomic_DNA"/>
</dbReference>
<dbReference type="RefSeq" id="WP_005601234.1">
    <property type="nucleotide sequence ID" value="NC_009053.1"/>
</dbReference>
<dbReference type="SMR" id="A3N0R3"/>
<dbReference type="STRING" id="416269.APL_0903"/>
<dbReference type="EnsemblBacteria" id="ABN73999">
    <property type="protein sequence ID" value="ABN73999"/>
    <property type="gene ID" value="APL_0903"/>
</dbReference>
<dbReference type="KEGG" id="apl:APL_0903"/>
<dbReference type="eggNOG" id="COG0302">
    <property type="taxonomic scope" value="Bacteria"/>
</dbReference>
<dbReference type="HOGENOM" id="CLU_049768_3_2_6"/>
<dbReference type="UniPathway" id="UPA00848">
    <property type="reaction ID" value="UER00151"/>
</dbReference>
<dbReference type="Proteomes" id="UP000001432">
    <property type="component" value="Chromosome"/>
</dbReference>
<dbReference type="GO" id="GO:0005737">
    <property type="term" value="C:cytoplasm"/>
    <property type="evidence" value="ECO:0007669"/>
    <property type="project" value="TreeGrafter"/>
</dbReference>
<dbReference type="GO" id="GO:0005525">
    <property type="term" value="F:GTP binding"/>
    <property type="evidence" value="ECO:0007669"/>
    <property type="project" value="UniProtKB-KW"/>
</dbReference>
<dbReference type="GO" id="GO:0003934">
    <property type="term" value="F:GTP cyclohydrolase I activity"/>
    <property type="evidence" value="ECO:0007669"/>
    <property type="project" value="UniProtKB-UniRule"/>
</dbReference>
<dbReference type="GO" id="GO:0008270">
    <property type="term" value="F:zinc ion binding"/>
    <property type="evidence" value="ECO:0007669"/>
    <property type="project" value="UniProtKB-UniRule"/>
</dbReference>
<dbReference type="GO" id="GO:0006730">
    <property type="term" value="P:one-carbon metabolic process"/>
    <property type="evidence" value="ECO:0007669"/>
    <property type="project" value="UniProtKB-UniRule"/>
</dbReference>
<dbReference type="GO" id="GO:0006729">
    <property type="term" value="P:tetrahydrobiopterin biosynthetic process"/>
    <property type="evidence" value="ECO:0007669"/>
    <property type="project" value="TreeGrafter"/>
</dbReference>
<dbReference type="GO" id="GO:0046654">
    <property type="term" value="P:tetrahydrofolate biosynthetic process"/>
    <property type="evidence" value="ECO:0007669"/>
    <property type="project" value="UniProtKB-UniRule"/>
</dbReference>
<dbReference type="CDD" id="cd00642">
    <property type="entry name" value="GTP_cyclohydro1"/>
    <property type="match status" value="1"/>
</dbReference>
<dbReference type="FunFam" id="3.30.1130.10:FF:000001">
    <property type="entry name" value="GTP cyclohydrolase 1"/>
    <property type="match status" value="1"/>
</dbReference>
<dbReference type="Gene3D" id="1.10.286.10">
    <property type="match status" value="1"/>
</dbReference>
<dbReference type="Gene3D" id="3.30.1130.10">
    <property type="match status" value="1"/>
</dbReference>
<dbReference type="HAMAP" id="MF_00223">
    <property type="entry name" value="FolE"/>
    <property type="match status" value="1"/>
</dbReference>
<dbReference type="InterPro" id="IPR043133">
    <property type="entry name" value="GTP-CH-I_C/QueF"/>
</dbReference>
<dbReference type="InterPro" id="IPR043134">
    <property type="entry name" value="GTP-CH-I_N"/>
</dbReference>
<dbReference type="InterPro" id="IPR001474">
    <property type="entry name" value="GTP_CycHdrlase_I"/>
</dbReference>
<dbReference type="InterPro" id="IPR018234">
    <property type="entry name" value="GTP_CycHdrlase_I_CS"/>
</dbReference>
<dbReference type="InterPro" id="IPR020602">
    <property type="entry name" value="GTP_CycHdrlase_I_dom"/>
</dbReference>
<dbReference type="NCBIfam" id="TIGR00063">
    <property type="entry name" value="folE"/>
    <property type="match status" value="1"/>
</dbReference>
<dbReference type="NCBIfam" id="NF006824">
    <property type="entry name" value="PRK09347.1-1"/>
    <property type="match status" value="1"/>
</dbReference>
<dbReference type="NCBIfam" id="NF006825">
    <property type="entry name" value="PRK09347.1-2"/>
    <property type="match status" value="1"/>
</dbReference>
<dbReference type="NCBIfam" id="NF006826">
    <property type="entry name" value="PRK09347.1-3"/>
    <property type="match status" value="1"/>
</dbReference>
<dbReference type="PANTHER" id="PTHR11109:SF7">
    <property type="entry name" value="GTP CYCLOHYDROLASE 1"/>
    <property type="match status" value="1"/>
</dbReference>
<dbReference type="PANTHER" id="PTHR11109">
    <property type="entry name" value="GTP CYCLOHYDROLASE I"/>
    <property type="match status" value="1"/>
</dbReference>
<dbReference type="Pfam" id="PF01227">
    <property type="entry name" value="GTP_cyclohydroI"/>
    <property type="match status" value="1"/>
</dbReference>
<dbReference type="SUPFAM" id="SSF55620">
    <property type="entry name" value="Tetrahydrobiopterin biosynthesis enzymes-like"/>
    <property type="match status" value="1"/>
</dbReference>
<dbReference type="PROSITE" id="PS00859">
    <property type="entry name" value="GTP_CYCLOHYDROL_1_1"/>
    <property type="match status" value="1"/>
</dbReference>
<feature type="chain" id="PRO_1000043653" description="GTP cyclohydrolase 1">
    <location>
        <begin position="1"/>
        <end position="218"/>
    </location>
</feature>
<feature type="binding site" evidence="2">
    <location>
        <position position="109"/>
    </location>
    <ligand>
        <name>Zn(2+)</name>
        <dbReference type="ChEBI" id="CHEBI:29105"/>
    </ligand>
</feature>
<feature type="binding site" evidence="2">
    <location>
        <position position="112"/>
    </location>
    <ligand>
        <name>Zn(2+)</name>
        <dbReference type="ChEBI" id="CHEBI:29105"/>
    </ligand>
</feature>
<feature type="binding site" evidence="2">
    <location>
        <position position="180"/>
    </location>
    <ligand>
        <name>Zn(2+)</name>
        <dbReference type="ChEBI" id="CHEBI:29105"/>
    </ligand>
</feature>
<reference key="1">
    <citation type="journal article" date="2008" name="J. Bacteriol.">
        <title>The complete genome sequence of Actinobacillus pleuropneumoniae L20 (serotype 5b).</title>
        <authorList>
            <person name="Foote S.J."/>
            <person name="Bosse J.T."/>
            <person name="Bouevitch A.B."/>
            <person name="Langford P.R."/>
            <person name="Young N.M."/>
            <person name="Nash J.H.E."/>
        </authorList>
    </citation>
    <scope>NUCLEOTIDE SEQUENCE [LARGE SCALE GENOMIC DNA]</scope>
    <source>
        <strain>L20</strain>
    </source>
</reference>
<name>GCH1_ACTP2</name>
<organism>
    <name type="scientific">Actinobacillus pleuropneumoniae serotype 5b (strain L20)</name>
    <dbReference type="NCBI Taxonomy" id="416269"/>
    <lineage>
        <taxon>Bacteria</taxon>
        <taxon>Pseudomonadati</taxon>
        <taxon>Pseudomonadota</taxon>
        <taxon>Gammaproteobacteria</taxon>
        <taxon>Pasteurellales</taxon>
        <taxon>Pasteurellaceae</taxon>
        <taxon>Actinobacillus</taxon>
    </lineage>
</organism>
<protein>
    <recommendedName>
        <fullName evidence="2">GTP cyclohydrolase 1</fullName>
        <ecNumber evidence="2">3.5.4.16</ecNumber>
    </recommendedName>
    <alternativeName>
        <fullName evidence="2">GTP cyclohydrolase I</fullName>
        <shortName evidence="2">GTP-CH-I</shortName>
    </alternativeName>
</protein>
<proteinExistence type="inferred from homology"/>